<reference key="1">
    <citation type="journal article" date="2000" name="Nature">
        <title>Complete genome sequence of Pseudomonas aeruginosa PAO1, an opportunistic pathogen.</title>
        <authorList>
            <person name="Stover C.K."/>
            <person name="Pham X.-Q.T."/>
            <person name="Erwin A.L."/>
            <person name="Mizoguchi S.D."/>
            <person name="Warrener P."/>
            <person name="Hickey M.J."/>
            <person name="Brinkman F.S.L."/>
            <person name="Hufnagle W.O."/>
            <person name="Kowalik D.J."/>
            <person name="Lagrou M."/>
            <person name="Garber R.L."/>
            <person name="Goltry L."/>
            <person name="Tolentino E."/>
            <person name="Westbrock-Wadman S."/>
            <person name="Yuan Y."/>
            <person name="Brody L.L."/>
            <person name="Coulter S.N."/>
            <person name="Folger K.R."/>
            <person name="Kas A."/>
            <person name="Larbig K."/>
            <person name="Lim R.M."/>
            <person name="Smith K.A."/>
            <person name="Spencer D.H."/>
            <person name="Wong G.K.-S."/>
            <person name="Wu Z."/>
            <person name="Paulsen I.T."/>
            <person name="Reizer J."/>
            <person name="Saier M.H. Jr."/>
            <person name="Hancock R.E.W."/>
            <person name="Lory S."/>
            <person name="Olson M.V."/>
        </authorList>
    </citation>
    <scope>NUCLEOTIDE SEQUENCE [LARGE SCALE GENOMIC DNA]</scope>
    <source>
        <strain>ATCC 15692 / DSM 22644 / CIP 104116 / JCM 14847 / LMG 12228 / 1C / PRS 101 / PAO1</strain>
    </source>
</reference>
<dbReference type="EMBL" id="AE004091">
    <property type="protein sequence ID" value="AAG06989.1"/>
    <property type="molecule type" value="Genomic_DNA"/>
</dbReference>
<dbReference type="PIR" id="C83196">
    <property type="entry name" value="C83196"/>
</dbReference>
<dbReference type="RefSeq" id="NP_252291.1">
    <property type="nucleotide sequence ID" value="NC_002516.2"/>
</dbReference>
<dbReference type="RefSeq" id="WP_003092213.1">
    <property type="nucleotide sequence ID" value="NZ_QZGE01000001.1"/>
</dbReference>
<dbReference type="SMR" id="Q9HY25"/>
<dbReference type="FunCoup" id="Q9HY25">
    <property type="interactions" value="96"/>
</dbReference>
<dbReference type="STRING" id="208964.PA3601"/>
<dbReference type="PaxDb" id="208964-PA3601"/>
<dbReference type="DNASU" id="880137"/>
<dbReference type="GeneID" id="880137"/>
<dbReference type="KEGG" id="pae:PA3601"/>
<dbReference type="PATRIC" id="fig|208964.12.peg.3768"/>
<dbReference type="PseudoCAP" id="PA3601"/>
<dbReference type="HOGENOM" id="CLU_114306_2_2_6"/>
<dbReference type="InParanoid" id="Q9HY25"/>
<dbReference type="OrthoDB" id="9803251at2"/>
<dbReference type="PhylomeDB" id="Q9HY25"/>
<dbReference type="BioCyc" id="PAER208964:G1FZ6-3670-MONOMER"/>
<dbReference type="PRO" id="PR:Q9HY25"/>
<dbReference type="Proteomes" id="UP000002438">
    <property type="component" value="Chromosome"/>
</dbReference>
<dbReference type="GO" id="GO:1990904">
    <property type="term" value="C:ribonucleoprotein complex"/>
    <property type="evidence" value="ECO:0007669"/>
    <property type="project" value="UniProtKB-KW"/>
</dbReference>
<dbReference type="GO" id="GO:0005840">
    <property type="term" value="C:ribosome"/>
    <property type="evidence" value="ECO:0007669"/>
    <property type="project" value="UniProtKB-KW"/>
</dbReference>
<dbReference type="GO" id="GO:0003735">
    <property type="term" value="F:structural constituent of ribosome"/>
    <property type="evidence" value="ECO:0007669"/>
    <property type="project" value="InterPro"/>
</dbReference>
<dbReference type="GO" id="GO:0006412">
    <property type="term" value="P:translation"/>
    <property type="evidence" value="ECO:0007669"/>
    <property type="project" value="UniProtKB-UniRule"/>
</dbReference>
<dbReference type="Gene3D" id="4.10.830.30">
    <property type="entry name" value="Ribosomal protein L31"/>
    <property type="match status" value="1"/>
</dbReference>
<dbReference type="HAMAP" id="MF_00502">
    <property type="entry name" value="Ribosomal_bL31_2"/>
    <property type="match status" value="1"/>
</dbReference>
<dbReference type="InterPro" id="IPR034704">
    <property type="entry name" value="Ribosomal_bL28/bL31-like_sf"/>
</dbReference>
<dbReference type="InterPro" id="IPR002150">
    <property type="entry name" value="Ribosomal_bL31"/>
</dbReference>
<dbReference type="InterPro" id="IPR027493">
    <property type="entry name" value="Ribosomal_bL31_B"/>
</dbReference>
<dbReference type="InterPro" id="IPR042105">
    <property type="entry name" value="Ribosomal_bL31_sf"/>
</dbReference>
<dbReference type="NCBIfam" id="TIGR00105">
    <property type="entry name" value="L31"/>
    <property type="match status" value="1"/>
</dbReference>
<dbReference type="NCBIfam" id="NF002462">
    <property type="entry name" value="PRK01678.1"/>
    <property type="match status" value="1"/>
</dbReference>
<dbReference type="PANTHER" id="PTHR33280">
    <property type="entry name" value="50S RIBOSOMAL PROTEIN L31, CHLOROPLASTIC"/>
    <property type="match status" value="1"/>
</dbReference>
<dbReference type="PANTHER" id="PTHR33280:SF1">
    <property type="entry name" value="LARGE RIBOSOMAL SUBUNIT PROTEIN BL31C"/>
    <property type="match status" value="1"/>
</dbReference>
<dbReference type="Pfam" id="PF01197">
    <property type="entry name" value="Ribosomal_L31"/>
    <property type="match status" value="1"/>
</dbReference>
<dbReference type="PRINTS" id="PR01249">
    <property type="entry name" value="RIBOSOMALL31"/>
</dbReference>
<dbReference type="SUPFAM" id="SSF143800">
    <property type="entry name" value="L28p-like"/>
    <property type="match status" value="1"/>
</dbReference>
<dbReference type="PROSITE" id="PS01143">
    <property type="entry name" value="RIBOSOMAL_L31"/>
    <property type="match status" value="1"/>
</dbReference>
<name>RL31B_PSEAE</name>
<gene>
    <name evidence="1" type="primary">rpmE2</name>
    <name type="ordered locus">PA3601</name>
</gene>
<organism>
    <name type="scientific">Pseudomonas aeruginosa (strain ATCC 15692 / DSM 22644 / CIP 104116 / JCM 14847 / LMG 12228 / 1C / PRS 101 / PAO1)</name>
    <dbReference type="NCBI Taxonomy" id="208964"/>
    <lineage>
        <taxon>Bacteria</taxon>
        <taxon>Pseudomonadati</taxon>
        <taxon>Pseudomonadota</taxon>
        <taxon>Gammaproteobacteria</taxon>
        <taxon>Pseudomonadales</taxon>
        <taxon>Pseudomonadaceae</taxon>
        <taxon>Pseudomonas</taxon>
    </lineage>
</organism>
<evidence type="ECO:0000255" key="1">
    <source>
        <dbReference type="HAMAP-Rule" id="MF_00502"/>
    </source>
</evidence>
<evidence type="ECO:0000305" key="2"/>
<keyword id="KW-1185">Reference proteome</keyword>
<keyword id="KW-0687">Ribonucleoprotein</keyword>
<keyword id="KW-0689">Ribosomal protein</keyword>
<sequence>MKPGIHPEYRPVLFHDTSADVYFLIGSTAETDKTHTHTDGKTYPYVTLDVSSASHPVYTGEQRKTKSEGRVAGFNKRFAGFVGGKGA</sequence>
<proteinExistence type="inferred from homology"/>
<accession>Q9HY25</accession>
<comment type="subunit">
    <text evidence="1">Part of the 50S ribosomal subunit.</text>
</comment>
<comment type="similarity">
    <text evidence="1">Belongs to the bacterial ribosomal protein bL31 family. Type B subfamily.</text>
</comment>
<feature type="chain" id="PRO_0000173248" description="Large ribosomal subunit protein bL31B">
    <location>
        <begin position="1"/>
        <end position="87"/>
    </location>
</feature>
<protein>
    <recommendedName>
        <fullName evidence="1">Large ribosomal subunit protein bL31B</fullName>
    </recommendedName>
    <alternativeName>
        <fullName evidence="2">50S ribosomal protein L31 type B</fullName>
    </alternativeName>
</protein>